<accession>Q78TU8</accession>
<keyword id="KW-0009">Actin-binding</keyword>
<keyword id="KW-0131">Cell cycle</keyword>
<keyword id="KW-0965">Cell junction</keyword>
<keyword id="KW-1003">Cell membrane</keyword>
<keyword id="KW-0966">Cell projection</keyword>
<keyword id="KW-0175">Coiled coil</keyword>
<keyword id="KW-0963">Cytoplasm</keyword>
<keyword id="KW-0206">Cytoskeleton</keyword>
<keyword id="KW-0341">Growth regulation</keyword>
<keyword id="KW-0472">Membrane</keyword>
<keyword id="KW-0539">Nucleus</keyword>
<keyword id="KW-1185">Reference proteome</keyword>
<keyword id="KW-0346">Stress response</keyword>
<keyword id="KW-0770">Synapse</keyword>
<evidence type="ECO:0000250" key="1">
    <source>
        <dbReference type="UniProtKB" id="O95990"/>
    </source>
</evidence>
<evidence type="ECO:0000255" key="2"/>
<evidence type="ECO:0000256" key="3">
    <source>
        <dbReference type="SAM" id="MobiDB-lite"/>
    </source>
</evidence>
<evidence type="ECO:0000269" key="4">
    <source>
    </source>
</evidence>
<evidence type="ECO:0000269" key="5">
    <source>
    </source>
</evidence>
<evidence type="ECO:0000305" key="6"/>
<evidence type="ECO:0000312" key="7">
    <source>
        <dbReference type="EMBL" id="AAH55107.1"/>
    </source>
</evidence>
<evidence type="ECO:0000312" key="8">
    <source>
        <dbReference type="MGI" id="MGI:3041256"/>
    </source>
</evidence>
<organism>
    <name type="scientific">Mus musculus</name>
    <name type="common">Mouse</name>
    <dbReference type="NCBI Taxonomy" id="10090"/>
    <lineage>
        <taxon>Eukaryota</taxon>
        <taxon>Metazoa</taxon>
        <taxon>Chordata</taxon>
        <taxon>Craniata</taxon>
        <taxon>Vertebrata</taxon>
        <taxon>Euteleostomi</taxon>
        <taxon>Mammalia</taxon>
        <taxon>Eutheria</taxon>
        <taxon>Euarchontoglires</taxon>
        <taxon>Glires</taxon>
        <taxon>Rodentia</taxon>
        <taxon>Myomorpha</taxon>
        <taxon>Muroidea</taxon>
        <taxon>Muridae</taxon>
        <taxon>Murinae</taxon>
        <taxon>Mus</taxon>
        <taxon>Mus</taxon>
    </lineage>
</organism>
<reference key="1">
    <citation type="journal article" date="2005" name="Science">
        <title>The transcriptional landscape of the mammalian genome.</title>
        <authorList>
            <person name="Carninci P."/>
            <person name="Kasukawa T."/>
            <person name="Katayama S."/>
            <person name="Gough J."/>
            <person name="Frith M.C."/>
            <person name="Maeda N."/>
            <person name="Oyama R."/>
            <person name="Ravasi T."/>
            <person name="Lenhard B."/>
            <person name="Wells C."/>
            <person name="Kodzius R."/>
            <person name="Shimokawa K."/>
            <person name="Bajic V.B."/>
            <person name="Brenner S.E."/>
            <person name="Batalov S."/>
            <person name="Forrest A.R."/>
            <person name="Zavolan M."/>
            <person name="Davis M.J."/>
            <person name="Wilming L.G."/>
            <person name="Aidinis V."/>
            <person name="Allen J.E."/>
            <person name="Ambesi-Impiombato A."/>
            <person name="Apweiler R."/>
            <person name="Aturaliya R.N."/>
            <person name="Bailey T.L."/>
            <person name="Bansal M."/>
            <person name="Baxter L."/>
            <person name="Beisel K.W."/>
            <person name="Bersano T."/>
            <person name="Bono H."/>
            <person name="Chalk A.M."/>
            <person name="Chiu K.P."/>
            <person name="Choudhary V."/>
            <person name="Christoffels A."/>
            <person name="Clutterbuck D.R."/>
            <person name="Crowe M.L."/>
            <person name="Dalla E."/>
            <person name="Dalrymple B.P."/>
            <person name="de Bono B."/>
            <person name="Della Gatta G."/>
            <person name="di Bernardo D."/>
            <person name="Down T."/>
            <person name="Engstrom P."/>
            <person name="Fagiolini M."/>
            <person name="Faulkner G."/>
            <person name="Fletcher C.F."/>
            <person name="Fukushima T."/>
            <person name="Furuno M."/>
            <person name="Futaki S."/>
            <person name="Gariboldi M."/>
            <person name="Georgii-Hemming P."/>
            <person name="Gingeras T.R."/>
            <person name="Gojobori T."/>
            <person name="Green R.E."/>
            <person name="Gustincich S."/>
            <person name="Harbers M."/>
            <person name="Hayashi Y."/>
            <person name="Hensch T.K."/>
            <person name="Hirokawa N."/>
            <person name="Hill D."/>
            <person name="Huminiecki L."/>
            <person name="Iacono M."/>
            <person name="Ikeo K."/>
            <person name="Iwama A."/>
            <person name="Ishikawa T."/>
            <person name="Jakt M."/>
            <person name="Kanapin A."/>
            <person name="Katoh M."/>
            <person name="Kawasawa Y."/>
            <person name="Kelso J."/>
            <person name="Kitamura H."/>
            <person name="Kitano H."/>
            <person name="Kollias G."/>
            <person name="Krishnan S.P."/>
            <person name="Kruger A."/>
            <person name="Kummerfeld S.K."/>
            <person name="Kurochkin I.V."/>
            <person name="Lareau L.F."/>
            <person name="Lazarevic D."/>
            <person name="Lipovich L."/>
            <person name="Liu J."/>
            <person name="Liuni S."/>
            <person name="McWilliam S."/>
            <person name="Madan Babu M."/>
            <person name="Madera M."/>
            <person name="Marchionni L."/>
            <person name="Matsuda H."/>
            <person name="Matsuzawa S."/>
            <person name="Miki H."/>
            <person name="Mignone F."/>
            <person name="Miyake S."/>
            <person name="Morris K."/>
            <person name="Mottagui-Tabar S."/>
            <person name="Mulder N."/>
            <person name="Nakano N."/>
            <person name="Nakauchi H."/>
            <person name="Ng P."/>
            <person name="Nilsson R."/>
            <person name="Nishiguchi S."/>
            <person name="Nishikawa S."/>
            <person name="Nori F."/>
            <person name="Ohara O."/>
            <person name="Okazaki Y."/>
            <person name="Orlando V."/>
            <person name="Pang K.C."/>
            <person name="Pavan W.J."/>
            <person name="Pavesi G."/>
            <person name="Pesole G."/>
            <person name="Petrovsky N."/>
            <person name="Piazza S."/>
            <person name="Reed J."/>
            <person name="Reid J.F."/>
            <person name="Ring B.Z."/>
            <person name="Ringwald M."/>
            <person name="Rost B."/>
            <person name="Ruan Y."/>
            <person name="Salzberg S.L."/>
            <person name="Sandelin A."/>
            <person name="Schneider C."/>
            <person name="Schoenbach C."/>
            <person name="Sekiguchi K."/>
            <person name="Semple C.A."/>
            <person name="Seno S."/>
            <person name="Sessa L."/>
            <person name="Sheng Y."/>
            <person name="Shibata Y."/>
            <person name="Shimada H."/>
            <person name="Shimada K."/>
            <person name="Silva D."/>
            <person name="Sinclair B."/>
            <person name="Sperling S."/>
            <person name="Stupka E."/>
            <person name="Sugiura K."/>
            <person name="Sultana R."/>
            <person name="Takenaka Y."/>
            <person name="Taki K."/>
            <person name="Tammoja K."/>
            <person name="Tan S.L."/>
            <person name="Tang S."/>
            <person name="Taylor M.S."/>
            <person name="Tegner J."/>
            <person name="Teichmann S.A."/>
            <person name="Ueda H.R."/>
            <person name="van Nimwegen E."/>
            <person name="Verardo R."/>
            <person name="Wei C.L."/>
            <person name="Yagi K."/>
            <person name="Yamanishi H."/>
            <person name="Zabarovsky E."/>
            <person name="Zhu S."/>
            <person name="Zimmer A."/>
            <person name="Hide W."/>
            <person name="Bult C."/>
            <person name="Grimmond S.M."/>
            <person name="Teasdale R.D."/>
            <person name="Liu E.T."/>
            <person name="Brusic V."/>
            <person name="Quackenbush J."/>
            <person name="Wahlestedt C."/>
            <person name="Mattick J.S."/>
            <person name="Hume D.A."/>
            <person name="Kai C."/>
            <person name="Sasaki D."/>
            <person name="Tomaru Y."/>
            <person name="Fukuda S."/>
            <person name="Kanamori-Katayama M."/>
            <person name="Suzuki M."/>
            <person name="Aoki J."/>
            <person name="Arakawa T."/>
            <person name="Iida J."/>
            <person name="Imamura K."/>
            <person name="Itoh M."/>
            <person name="Kato T."/>
            <person name="Kawaji H."/>
            <person name="Kawagashira N."/>
            <person name="Kawashima T."/>
            <person name="Kojima M."/>
            <person name="Kondo S."/>
            <person name="Konno H."/>
            <person name="Nakano K."/>
            <person name="Ninomiya N."/>
            <person name="Nishio T."/>
            <person name="Okada M."/>
            <person name="Plessy C."/>
            <person name="Shibata K."/>
            <person name="Shiraki T."/>
            <person name="Suzuki S."/>
            <person name="Tagami M."/>
            <person name="Waki K."/>
            <person name="Watahiki A."/>
            <person name="Okamura-Oho Y."/>
            <person name="Suzuki H."/>
            <person name="Kawai J."/>
            <person name="Hayashizaki Y."/>
        </authorList>
    </citation>
    <scope>NUCLEOTIDE SEQUENCE [LARGE SCALE MRNA]</scope>
    <source>
        <strain>C57BL/6J</strain>
        <tissue>Retina</tissue>
    </source>
</reference>
<reference key="2">
    <citation type="journal article" date="2009" name="PLoS Biol.">
        <title>Lineage-specific biology revealed by a finished genome assembly of the mouse.</title>
        <authorList>
            <person name="Church D.M."/>
            <person name="Goodstadt L."/>
            <person name="Hillier L.W."/>
            <person name="Zody M.C."/>
            <person name="Goldstein S."/>
            <person name="She X."/>
            <person name="Bult C.J."/>
            <person name="Agarwala R."/>
            <person name="Cherry J.L."/>
            <person name="DiCuccio M."/>
            <person name="Hlavina W."/>
            <person name="Kapustin Y."/>
            <person name="Meric P."/>
            <person name="Maglott D."/>
            <person name="Birtle Z."/>
            <person name="Marques A.C."/>
            <person name="Graves T."/>
            <person name="Zhou S."/>
            <person name="Teague B."/>
            <person name="Potamousis K."/>
            <person name="Churas C."/>
            <person name="Place M."/>
            <person name="Herschleb J."/>
            <person name="Runnheim R."/>
            <person name="Forrest D."/>
            <person name="Amos-Landgraf J."/>
            <person name="Schwartz D.C."/>
            <person name="Cheng Z."/>
            <person name="Lindblad-Toh K."/>
            <person name="Eichler E.E."/>
            <person name="Ponting C.P."/>
        </authorList>
    </citation>
    <scope>NUCLEOTIDE SEQUENCE [LARGE SCALE GENOMIC DNA]</scope>
    <source>
        <strain>C57BL/6J</strain>
    </source>
</reference>
<reference key="3">
    <citation type="journal article" date="2004" name="Genome Res.">
        <title>The status, quality, and expansion of the NIH full-length cDNA project: the Mammalian Gene Collection (MGC).</title>
        <authorList>
            <consortium name="The MGC Project Team"/>
        </authorList>
    </citation>
    <scope>NUCLEOTIDE SEQUENCE [LARGE SCALE MRNA]</scope>
    <source>
        <tissue evidence="7">Brain</tissue>
    </source>
</reference>
<reference key="4">
    <citation type="journal article" date="2011" name="Proc. Natl. Acad. Sci. U.S.A.">
        <title>Tumor suppressor down-regulated in renal cell carcinoma 1 (DRR1) is a stress-induced actin bundling factor that modulates synaptic efficacy and cognition.</title>
        <authorList>
            <person name="Schmidt M.V."/>
            <person name="Schuelke J.P."/>
            <person name="Liebl C."/>
            <person name="Stiess M."/>
            <person name="Avrabos C."/>
            <person name="Bock J."/>
            <person name="Wochnik G.M."/>
            <person name="Davies H.A."/>
            <person name="Zimmermann N."/>
            <person name="Scharf S.H."/>
            <person name="Truembach D."/>
            <person name="Wurst W."/>
            <person name="Zieglgaensberger W."/>
            <person name="Turck C."/>
            <person name="Holsboer F."/>
            <person name="Stewart M.G."/>
            <person name="Bradke F."/>
            <person name="Eder M."/>
            <person name="Mueller M.B."/>
            <person name="Rein T."/>
        </authorList>
    </citation>
    <scope>FUNCTION</scope>
    <scope>INTERACTION WITH ACTB; F-ACTIN AND PRDX1</scope>
    <scope>SUBCELLULAR LOCATION</scope>
    <scope>TISSUE SPECIFICITY</scope>
    <scope>INDUCTION</scope>
</reference>
<reference key="5">
    <citation type="journal article" date="2015" name="Neuroscience">
        <title>Deciphering the spatio-temporal expression and stress regulation of Fam107B, the paralog of the resilience-promoting protein DRR1 in the mouse brain.</title>
        <authorList>
            <person name="Masana M."/>
            <person name="Jukic M.M."/>
            <person name="Kretzschmar A."/>
            <person name="Wagner K.V."/>
            <person name="Westerholz S."/>
            <person name="Schmidt M.V."/>
            <person name="Rein T."/>
            <person name="Brodski C."/>
            <person name="Mueller M.B."/>
        </authorList>
    </citation>
    <scope>INDUCTION</scope>
</reference>
<name>F107A_MOUSE</name>
<protein>
    <recommendedName>
        <fullName evidence="6">Actin-associated protein FAM107A</fullName>
    </recommendedName>
</protein>
<dbReference type="EMBL" id="AK044219">
    <property type="protein sequence ID" value="BAC31824.1"/>
    <property type="molecule type" value="mRNA"/>
</dbReference>
<dbReference type="EMBL" id="CT025547">
    <property type="status" value="NOT_ANNOTATED_CDS"/>
    <property type="molecule type" value="Genomic_DNA"/>
</dbReference>
<dbReference type="EMBL" id="BC055107">
    <property type="protein sequence ID" value="AAH55107.1"/>
    <property type="molecule type" value="mRNA"/>
</dbReference>
<dbReference type="CCDS" id="CCDS26813.1"/>
<dbReference type="RefSeq" id="NP_001347266.1">
    <property type="nucleotide sequence ID" value="NM_001360337.2"/>
</dbReference>
<dbReference type="RefSeq" id="NP_001347267.1">
    <property type="nucleotide sequence ID" value="NM_001360338.2"/>
</dbReference>
<dbReference type="RefSeq" id="NP_001412844.1">
    <property type="nucleotide sequence ID" value="NM_001425915.1"/>
</dbReference>
<dbReference type="RefSeq" id="NP_001412845.1">
    <property type="nucleotide sequence ID" value="NM_001425916.1"/>
</dbReference>
<dbReference type="RefSeq" id="NP_001412846.1">
    <property type="nucleotide sequence ID" value="NM_001425917.1"/>
</dbReference>
<dbReference type="RefSeq" id="NP_899010.1">
    <property type="nucleotide sequence ID" value="NM_183187.5"/>
</dbReference>
<dbReference type="RefSeq" id="XP_006518083.1">
    <property type="nucleotide sequence ID" value="XM_006518020.2"/>
</dbReference>
<dbReference type="RefSeq" id="XP_006518084.1">
    <property type="nucleotide sequence ID" value="XM_006518021.2"/>
</dbReference>
<dbReference type="RefSeq" id="XP_006518085.1">
    <property type="nucleotide sequence ID" value="XM_006518022.2"/>
</dbReference>
<dbReference type="RefSeq" id="XP_006518086.1">
    <property type="nucleotide sequence ID" value="XM_006518023.2"/>
</dbReference>
<dbReference type="SMR" id="Q78TU8"/>
<dbReference type="FunCoup" id="Q78TU8">
    <property type="interactions" value="130"/>
</dbReference>
<dbReference type="STRING" id="10090.ENSMUSP00000114015"/>
<dbReference type="PhosphoSitePlus" id="Q78TU8"/>
<dbReference type="PaxDb" id="10090-ENSMUSP00000045513"/>
<dbReference type="ProteomicsDB" id="338990"/>
<dbReference type="Antibodypedia" id="31675">
    <property type="antibodies" value="133 antibodies from 22 providers"/>
</dbReference>
<dbReference type="Ensembl" id="ENSMUST00000036070.15">
    <property type="protein sequence ID" value="ENSMUSP00000045513.9"/>
    <property type="gene ID" value="ENSMUSG00000021750.17"/>
</dbReference>
<dbReference type="Ensembl" id="ENSMUST00000121887.8">
    <property type="protein sequence ID" value="ENSMUSP00000114015.2"/>
    <property type="gene ID" value="ENSMUSG00000021750.17"/>
</dbReference>
<dbReference type="GeneID" id="268709"/>
<dbReference type="KEGG" id="mmu:268709"/>
<dbReference type="UCSC" id="uc007sfa.1">
    <property type="organism name" value="mouse"/>
</dbReference>
<dbReference type="AGR" id="MGI:3041256"/>
<dbReference type="CTD" id="11170"/>
<dbReference type="MGI" id="MGI:3041256">
    <property type="gene designation" value="Fam107a"/>
</dbReference>
<dbReference type="VEuPathDB" id="HostDB:ENSMUSG00000021750"/>
<dbReference type="eggNOG" id="ENOG502RZJK">
    <property type="taxonomic scope" value="Eukaryota"/>
</dbReference>
<dbReference type="GeneTree" id="ENSGT00390000011228"/>
<dbReference type="InParanoid" id="Q78TU8"/>
<dbReference type="OMA" id="MNHRRGI"/>
<dbReference type="PhylomeDB" id="Q78TU8"/>
<dbReference type="TreeFam" id="TF325943"/>
<dbReference type="BioGRID-ORCS" id="268709">
    <property type="hits" value="2 hits in 76 CRISPR screens"/>
</dbReference>
<dbReference type="CD-CODE" id="CE726F99">
    <property type="entry name" value="Postsynaptic density"/>
</dbReference>
<dbReference type="ChiTaRS" id="Fam107a">
    <property type="organism name" value="mouse"/>
</dbReference>
<dbReference type="PRO" id="PR:Q78TU8"/>
<dbReference type="Proteomes" id="UP000000589">
    <property type="component" value="Chromosome 14"/>
</dbReference>
<dbReference type="RNAct" id="Q78TU8">
    <property type="molecule type" value="protein"/>
</dbReference>
<dbReference type="Bgee" id="ENSMUSG00000021750">
    <property type="expression patterns" value="Expressed in otolith organ and 201 other cell types or tissues"/>
</dbReference>
<dbReference type="ExpressionAtlas" id="Q78TU8">
    <property type="expression patterns" value="baseline and differential"/>
</dbReference>
<dbReference type="GO" id="GO:0015629">
    <property type="term" value="C:actin cytoskeleton"/>
    <property type="evidence" value="ECO:0000314"/>
    <property type="project" value="UniProtKB"/>
</dbReference>
<dbReference type="GO" id="GO:0005737">
    <property type="term" value="C:cytoplasm"/>
    <property type="evidence" value="ECO:0000250"/>
    <property type="project" value="UniProtKB"/>
</dbReference>
<dbReference type="GO" id="GO:0005925">
    <property type="term" value="C:focal adhesion"/>
    <property type="evidence" value="ECO:0000250"/>
    <property type="project" value="UniProtKB"/>
</dbReference>
<dbReference type="GO" id="GO:0098978">
    <property type="term" value="C:glutamatergic synapse"/>
    <property type="evidence" value="ECO:0000314"/>
    <property type="project" value="SynGO"/>
</dbReference>
<dbReference type="GO" id="GO:0043005">
    <property type="term" value="C:neuron projection"/>
    <property type="evidence" value="ECO:0000314"/>
    <property type="project" value="UniProtKB"/>
</dbReference>
<dbReference type="GO" id="GO:0005634">
    <property type="term" value="C:nucleus"/>
    <property type="evidence" value="ECO:0000250"/>
    <property type="project" value="UniProtKB"/>
</dbReference>
<dbReference type="GO" id="GO:0098871">
    <property type="term" value="C:postsynaptic actin cytoskeleton"/>
    <property type="evidence" value="ECO:0000314"/>
    <property type="project" value="SynGO"/>
</dbReference>
<dbReference type="GO" id="GO:0099143">
    <property type="term" value="C:presynaptic actin cytoskeleton"/>
    <property type="evidence" value="ECO:0000314"/>
    <property type="project" value="SynGO"/>
</dbReference>
<dbReference type="GO" id="GO:0032587">
    <property type="term" value="C:ruffle membrane"/>
    <property type="evidence" value="ECO:0000250"/>
    <property type="project" value="UniProtKB"/>
</dbReference>
<dbReference type="GO" id="GO:0001725">
    <property type="term" value="C:stress fiber"/>
    <property type="evidence" value="ECO:0000250"/>
    <property type="project" value="UniProtKB"/>
</dbReference>
<dbReference type="GO" id="GO:0045202">
    <property type="term" value="C:synapse"/>
    <property type="evidence" value="ECO:0000314"/>
    <property type="project" value="UniProtKB"/>
</dbReference>
<dbReference type="GO" id="GO:0003779">
    <property type="term" value="F:actin binding"/>
    <property type="evidence" value="ECO:0007669"/>
    <property type="project" value="UniProtKB-KW"/>
</dbReference>
<dbReference type="GO" id="GO:0051017">
    <property type="term" value="P:actin filament bundle assembly"/>
    <property type="evidence" value="ECO:0000315"/>
    <property type="project" value="UniProtKB"/>
</dbReference>
<dbReference type="GO" id="GO:0030041">
    <property type="term" value="P:actin filament polymerization"/>
    <property type="evidence" value="ECO:0000315"/>
    <property type="project" value="UniProtKB"/>
</dbReference>
<dbReference type="GO" id="GO:0071385">
    <property type="term" value="P:cellular response to glucocorticoid stimulus"/>
    <property type="evidence" value="ECO:0000315"/>
    <property type="project" value="UniProtKB"/>
</dbReference>
<dbReference type="GO" id="GO:0031669">
    <property type="term" value="P:cellular response to nutrient levels"/>
    <property type="evidence" value="ECO:0000315"/>
    <property type="project" value="UniProtKB"/>
</dbReference>
<dbReference type="GO" id="GO:0050890">
    <property type="term" value="P:cognition"/>
    <property type="evidence" value="ECO:0000315"/>
    <property type="project" value="UniProtKB"/>
</dbReference>
<dbReference type="GO" id="GO:0051895">
    <property type="term" value="P:negative regulation of focal adhesion assembly"/>
    <property type="evidence" value="ECO:0000250"/>
    <property type="project" value="UniProtKB"/>
</dbReference>
<dbReference type="GO" id="GO:2000134">
    <property type="term" value="P:negative regulation of G1/S transition of mitotic cell cycle"/>
    <property type="evidence" value="ECO:0000250"/>
    <property type="project" value="UniProtKB"/>
</dbReference>
<dbReference type="GO" id="GO:1900272">
    <property type="term" value="P:negative regulation of long-term synaptic potentiation"/>
    <property type="evidence" value="ECO:0000315"/>
    <property type="project" value="UniProtKB"/>
</dbReference>
<dbReference type="GO" id="GO:0031398">
    <property type="term" value="P:positive regulation of protein ubiquitination"/>
    <property type="evidence" value="ECO:0000250"/>
    <property type="project" value="UniProtKB"/>
</dbReference>
<dbReference type="GO" id="GO:0032956">
    <property type="term" value="P:regulation of actin cytoskeleton organization"/>
    <property type="evidence" value="ECO:0000250"/>
    <property type="project" value="UniProtKB"/>
</dbReference>
<dbReference type="GO" id="GO:0070507">
    <property type="term" value="P:regulation of microtubule cytoskeleton organization"/>
    <property type="evidence" value="ECO:0000250"/>
    <property type="project" value="UniProtKB"/>
</dbReference>
<dbReference type="GO" id="GO:0150052">
    <property type="term" value="P:regulation of postsynapse assembly"/>
    <property type="evidence" value="ECO:0000314"/>
    <property type="project" value="SynGO"/>
</dbReference>
<dbReference type="GO" id="GO:0031647">
    <property type="term" value="P:regulation of protein stability"/>
    <property type="evidence" value="ECO:0000250"/>
    <property type="project" value="UniProtKB"/>
</dbReference>
<dbReference type="InterPro" id="IPR009533">
    <property type="entry name" value="FAM107"/>
</dbReference>
<dbReference type="PANTHER" id="PTHR16768:SF3">
    <property type="entry name" value="ACTIN-ASSOCIATED PROTEIN FAM107A"/>
    <property type="match status" value="1"/>
</dbReference>
<dbReference type="PANTHER" id="PTHR16768">
    <property type="entry name" value="DOWN REGULATED IN RENAL CARCINOMA 1/TU3A"/>
    <property type="match status" value="1"/>
</dbReference>
<dbReference type="Pfam" id="PF06625">
    <property type="entry name" value="DUF1151"/>
    <property type="match status" value="1"/>
</dbReference>
<sequence length="144" mass="17510">MYSEIQRERADIEGLMARPEYREWNSELIKPKKLLNPVKASRSHQELHRELLMNHKRGLGMDSKPELQRVLEHRRRNQLIKKKEEELEAKRMQCPFKQELLRRQQRLNQLENPPQRDEDHAPEFIKVRENLRRITTLTSEERAL</sequence>
<gene>
    <name evidence="8" type="primary">Fam107a</name>
</gene>
<feature type="chain" id="PRO_0000444955" description="Actin-associated protein FAM107A">
    <location>
        <begin position="1"/>
        <end position="144"/>
    </location>
</feature>
<feature type="region of interest" description="Disordered" evidence="3">
    <location>
        <begin position="104"/>
        <end position="123"/>
    </location>
</feature>
<feature type="coiled-coil region" evidence="2">
    <location>
        <begin position="70"/>
        <end position="90"/>
    </location>
</feature>
<feature type="short sequence motif" description="Nuclear localization signal" evidence="1">
    <location>
        <begin position="74"/>
        <end position="84"/>
    </location>
</feature>
<feature type="compositionally biased region" description="Basic and acidic residues" evidence="3">
    <location>
        <begin position="114"/>
        <end position="123"/>
    </location>
</feature>
<proteinExistence type="evidence at protein level"/>
<comment type="function">
    <text evidence="1 4">Stress-inducible actin-binding protein that plays a role in synaptic and cognitive functions by modulating actin filamentous (F-actin) dynamics (PubMed:21969592). Mediates polymerization of globular actin to F-actin (PubMed:21969592). Also binds to, stabilizes and bundles F-actin (PubMed:21969592). Involved in synaptic function by regulating neurite outgrowth in an actin-dependent manner and for the acquisition of hippocampus-dependent cognitive function, such as learning and long-term memory (PubMed:21969592). Plays a role in the actin and microtubule cytoskeleton organization; negatively regulates focal adhesion (FA) assembly promoting malignant glial cell migration in an actin-, microtubule- and MAP1A-dependent manner. Also involved in neuroblastoma G1/S phase cell cycle progression and cell proliferation inhibition by stimulating ubiquitination of NF-kappa-B subunit RELA and NF-kappa-B degradation in a COMMD1- and actin-dependent manner. May play a role in tumor development (By similarity).</text>
</comment>
<comment type="subunit">
    <text evidence="1 4">Interacts with ACTB (PubMed:21969592). Interacts with F-actin (PubMed:21969592). Interacts with PRDX1 (PubMed:21969592). Interacts with COMMD1; this interaction stabilizes COMMD1 in the nucleus (By similarity). Interacts with MAP1A (By similarity).</text>
</comment>
<comment type="subcellular location">
    <subcellularLocation>
        <location evidence="1">Nucleus</location>
    </subcellularLocation>
    <subcellularLocation>
        <location evidence="4">Cytoplasm</location>
        <location evidence="4">Cytoskeleton</location>
        <location evidence="4">Stress fiber</location>
    </subcellularLocation>
    <subcellularLocation>
        <location evidence="1">Cell junction</location>
        <location evidence="1">Focal adhesion</location>
    </subcellularLocation>
    <subcellularLocation>
        <location evidence="1">Cell projection</location>
        <location evidence="1">Ruffle membrane</location>
    </subcellularLocation>
    <subcellularLocation>
        <location evidence="4">Synapse</location>
    </subcellularLocation>
    <text evidence="1 4">Colocalizes with F-actin (PubMed:21969592). Colocalizes with F-actin and COMMD1 in the nucleus. Colocalizes with MAP1A along actin stress fibers and membrane ruffles (By similarity).</text>
</comment>
<comment type="tissue specificity">
    <text evidence="4">Expressed in septum, the neocortex, the CA3 region of the hippocampus and the cerebellum (at protein level).</text>
</comment>
<comment type="induction">
    <text evidence="4 5">Up-regulated in the hypothalamic paraventricular nucleus (PVN) and the CA3 region of the hippocampus of the brain in response to postnatal maternal separation or food deprivation and glucocorticoids stimulation in adult animals (PubMed:21969592). Up-regulated in CA1, CA3 and dente gyrus regions of the hippocampus in response to acute social defeat stress or glucocorticoids stimulation (PubMed:25637808).</text>
</comment>